<keyword id="KW-0143">Chaperone</keyword>
<keyword id="KW-0256">Endoplasmic reticulum</keyword>
<keyword id="KW-1185">Reference proteome</keyword>
<keyword id="KW-0732">Signal</keyword>
<protein>
    <recommendedName>
        <fullName evidence="6">DnaJ protein ERDJ3B</fullName>
    </recommendedName>
    <alternativeName>
        <fullName evidence="6">Chaperone protein dnaJ B6</fullName>
        <shortName evidence="4">OsDjB6</shortName>
    </alternativeName>
    <alternativeName>
        <fullName evidence="6">Endoplasmic reticulum dnaJ domain-containing protein 3B</fullName>
        <shortName evidence="5">OsERdj3B</shortName>
    </alternativeName>
</protein>
<proteinExistence type="evidence at protein level"/>
<name>DJB6_ORYSJ</name>
<dbReference type="EMBL" id="AC087425">
    <property type="protein sequence ID" value="AAS55775.2"/>
    <property type="status" value="ALT_SEQ"/>
    <property type="molecule type" value="Genomic_DNA"/>
</dbReference>
<dbReference type="EMBL" id="AC087551">
    <property type="protein sequence ID" value="AAV32228.1"/>
    <property type="status" value="ALT_SEQ"/>
    <property type="molecule type" value="Genomic_DNA"/>
</dbReference>
<dbReference type="EMBL" id="AP008211">
    <property type="protein sequence ID" value="BAF16611.1"/>
    <property type="status" value="ALT_SEQ"/>
    <property type="molecule type" value="Genomic_DNA"/>
</dbReference>
<dbReference type="EMBL" id="AP014961">
    <property type="protein sequence ID" value="BAS92365.1"/>
    <property type="status" value="ALT_SEQ"/>
    <property type="molecule type" value="Genomic_DNA"/>
</dbReference>
<dbReference type="EMBL" id="CM000142">
    <property type="protein sequence ID" value="EEE62392.1"/>
    <property type="molecule type" value="Genomic_DNA"/>
</dbReference>
<dbReference type="RefSeq" id="XP_015639856.1">
    <property type="nucleotide sequence ID" value="XM_015784370.1"/>
</dbReference>
<dbReference type="SMR" id="B9FHF3"/>
<dbReference type="FunCoup" id="B9FHF3">
    <property type="interactions" value="2718"/>
</dbReference>
<dbReference type="STRING" id="39947.B9FHF3"/>
<dbReference type="PaxDb" id="39947-B9FHF3"/>
<dbReference type="KEGG" id="dosa:Os05g0156500"/>
<dbReference type="eggNOG" id="KOG0713">
    <property type="taxonomic scope" value="Eukaryota"/>
</dbReference>
<dbReference type="InParanoid" id="B9FHF3"/>
<dbReference type="OrthoDB" id="550424at2759"/>
<dbReference type="Proteomes" id="UP000000763">
    <property type="component" value="Chromosome 5"/>
</dbReference>
<dbReference type="Proteomes" id="UP000007752">
    <property type="component" value="Chromosome 5"/>
</dbReference>
<dbReference type="Proteomes" id="UP000059680">
    <property type="component" value="Chromosome 5"/>
</dbReference>
<dbReference type="GO" id="GO:0005737">
    <property type="term" value="C:cytoplasm"/>
    <property type="evidence" value="ECO:0000318"/>
    <property type="project" value="GO_Central"/>
</dbReference>
<dbReference type="GO" id="GO:0005788">
    <property type="term" value="C:endoplasmic reticulum lumen"/>
    <property type="evidence" value="ECO:0000314"/>
    <property type="project" value="UniProtKB"/>
</dbReference>
<dbReference type="GO" id="GO:0051087">
    <property type="term" value="F:protein-folding chaperone binding"/>
    <property type="evidence" value="ECO:0000318"/>
    <property type="project" value="GO_Central"/>
</dbReference>
<dbReference type="GO" id="GO:0051082">
    <property type="term" value="F:unfolded protein binding"/>
    <property type="evidence" value="ECO:0007669"/>
    <property type="project" value="InterPro"/>
</dbReference>
<dbReference type="GO" id="GO:0042026">
    <property type="term" value="P:protein refolding"/>
    <property type="evidence" value="ECO:0000318"/>
    <property type="project" value="GO_Central"/>
</dbReference>
<dbReference type="CDD" id="cd06257">
    <property type="entry name" value="DnaJ"/>
    <property type="match status" value="1"/>
</dbReference>
<dbReference type="CDD" id="cd10747">
    <property type="entry name" value="DnaJ_C"/>
    <property type="match status" value="1"/>
</dbReference>
<dbReference type="FunFam" id="1.10.287.110:FF:000062">
    <property type="entry name" value="DnaJ protein ERDJ3B"/>
    <property type="match status" value="1"/>
</dbReference>
<dbReference type="FunFam" id="2.60.260.20:FF:000013">
    <property type="entry name" value="DnaJ subfamily B member 11"/>
    <property type="match status" value="1"/>
</dbReference>
<dbReference type="Gene3D" id="1.10.287.110">
    <property type="entry name" value="DnaJ domain"/>
    <property type="match status" value="1"/>
</dbReference>
<dbReference type="Gene3D" id="2.60.260.20">
    <property type="entry name" value="Urease metallochaperone UreE, N-terminal domain"/>
    <property type="match status" value="2"/>
</dbReference>
<dbReference type="InterPro" id="IPR051736">
    <property type="entry name" value="DnaJ-B11-like"/>
</dbReference>
<dbReference type="InterPro" id="IPR002939">
    <property type="entry name" value="DnaJ_C"/>
</dbReference>
<dbReference type="InterPro" id="IPR001623">
    <property type="entry name" value="DnaJ_domain"/>
</dbReference>
<dbReference type="InterPro" id="IPR018253">
    <property type="entry name" value="DnaJ_domain_CS"/>
</dbReference>
<dbReference type="InterPro" id="IPR008971">
    <property type="entry name" value="HSP40/DnaJ_pept-bd"/>
</dbReference>
<dbReference type="InterPro" id="IPR036869">
    <property type="entry name" value="J_dom_sf"/>
</dbReference>
<dbReference type="PANTHER" id="PTHR44298">
    <property type="entry name" value="DNAJ HOMOLOG SUBFAMILY B MEMBER 11"/>
    <property type="match status" value="1"/>
</dbReference>
<dbReference type="PANTHER" id="PTHR44298:SF1">
    <property type="entry name" value="DNAJ HOMOLOG SUBFAMILY B MEMBER 11"/>
    <property type="match status" value="1"/>
</dbReference>
<dbReference type="Pfam" id="PF00226">
    <property type="entry name" value="DnaJ"/>
    <property type="match status" value="1"/>
</dbReference>
<dbReference type="Pfam" id="PF01556">
    <property type="entry name" value="DnaJ_C"/>
    <property type="match status" value="1"/>
</dbReference>
<dbReference type="PRINTS" id="PR00625">
    <property type="entry name" value="JDOMAIN"/>
</dbReference>
<dbReference type="SMART" id="SM00271">
    <property type="entry name" value="DnaJ"/>
    <property type="match status" value="1"/>
</dbReference>
<dbReference type="SUPFAM" id="SSF46565">
    <property type="entry name" value="Chaperone J-domain"/>
    <property type="match status" value="1"/>
</dbReference>
<dbReference type="SUPFAM" id="SSF49493">
    <property type="entry name" value="HSP40/DnaJ peptide-binding domain"/>
    <property type="match status" value="2"/>
</dbReference>
<dbReference type="PROSITE" id="PS00636">
    <property type="entry name" value="DNAJ_1"/>
    <property type="match status" value="1"/>
</dbReference>
<dbReference type="PROSITE" id="PS50076">
    <property type="entry name" value="DNAJ_2"/>
    <property type="match status" value="1"/>
</dbReference>
<sequence>MAAPRWIGPLLLLLLHFVAAVAGKSYYDVLQVPKGASEDQIKRSYRKLALKYHPDKNPNNEEANKRFAEINNAYEILTDQEKRKIYDRYGEEGLKQFQAQGGRGGGGGMNIQDIFSSFFGGGGGGMEEEEEQIIKGDDVIVELDASLEDLYMGGSLKVWREKNVIKPAPGKRRCNCRNEVYHRQIGPGMYQQMTEQVCDQCANVKYVREGDFLTVDIEKGMQDGQEVSFFEEGEPKIDGEPGDLKFRIRTAPHERFRREGNDLHTTVTISLLQALVGFEKTIKHLDNHMVEIGTKGITKPKEVRKFKGEGMPLYQSNKKGDLYVTFEVLFPKTLTDDQKSKLKSILT</sequence>
<feature type="signal peptide" evidence="1">
    <location>
        <begin position="1"/>
        <end position="23"/>
    </location>
</feature>
<feature type="chain" id="PRO_5002884143" description="DnaJ protein ERDJ3B">
    <location>
        <begin position="24"/>
        <end position="347"/>
    </location>
</feature>
<feature type="domain" description="J" evidence="2">
    <location>
        <begin position="25"/>
        <end position="90"/>
    </location>
</feature>
<comment type="function">
    <text evidence="7">May play a role in protein folding in the endoplasmic reticulum.</text>
</comment>
<comment type="subunit">
    <text evidence="3">Interacts with BIP1.</text>
</comment>
<comment type="subcellular location">
    <subcellularLocation>
        <location evidence="3">Endoplasmic reticulum</location>
    </subcellularLocation>
</comment>
<comment type="induction">
    <text evidence="3">By dithiothreitol- and tunicamycin-induced endoplasmic reticulum (ER) stress response.</text>
</comment>
<comment type="sequence caution" evidence="6">
    <conflict type="erroneous gene model prediction">
        <sequence resource="EMBL-CDS" id="AAS55775"/>
    </conflict>
</comment>
<comment type="sequence caution" evidence="6">
    <conflict type="erroneous gene model prediction">
        <sequence resource="EMBL-CDS" id="AAV32228"/>
    </conflict>
</comment>
<comment type="sequence caution" evidence="6">
    <conflict type="erroneous gene model prediction">
        <sequence resource="EMBL-CDS" id="BAF16611"/>
    </conflict>
</comment>
<comment type="sequence caution" evidence="6">
    <conflict type="erroneous gene model prediction">
        <sequence resource="EMBL-CDS" id="BAS92365"/>
    </conflict>
</comment>
<accession>B9FHF3</accession>
<accession>Q0DKL2</accession>
<accession>Q5WMX3</accession>
<accession>Q75M07</accession>
<gene>
    <name evidence="5" type="primary">ERDJ3B</name>
    <name evidence="6" type="synonym">DJB6</name>
    <name evidence="10" type="ordered locus">Os05g0156500</name>
    <name evidence="6" type="ordered locus">LOC_Os05g06440</name>
    <name evidence="11" type="ORF">OsJ_17183</name>
    <name evidence="9" type="ORF">P0431G05.15</name>
    <name evidence="8" type="ORF">P0676G05.5</name>
</gene>
<organism>
    <name type="scientific">Oryza sativa subsp. japonica</name>
    <name type="common">Rice</name>
    <dbReference type="NCBI Taxonomy" id="39947"/>
    <lineage>
        <taxon>Eukaryota</taxon>
        <taxon>Viridiplantae</taxon>
        <taxon>Streptophyta</taxon>
        <taxon>Embryophyta</taxon>
        <taxon>Tracheophyta</taxon>
        <taxon>Spermatophyta</taxon>
        <taxon>Magnoliopsida</taxon>
        <taxon>Liliopsida</taxon>
        <taxon>Poales</taxon>
        <taxon>Poaceae</taxon>
        <taxon>BOP clade</taxon>
        <taxon>Oryzoideae</taxon>
        <taxon>Oryzeae</taxon>
        <taxon>Oryzinae</taxon>
        <taxon>Oryza</taxon>
        <taxon>Oryza sativa</taxon>
    </lineage>
</organism>
<evidence type="ECO:0000255" key="1"/>
<evidence type="ECO:0000255" key="2">
    <source>
        <dbReference type="PROSITE-ProRule" id="PRU00286"/>
    </source>
</evidence>
<evidence type="ECO:0000269" key="3">
    <source>
    </source>
</evidence>
<evidence type="ECO:0000303" key="4">
    <source>
    </source>
</evidence>
<evidence type="ECO:0000303" key="5">
    <source>
    </source>
</evidence>
<evidence type="ECO:0000305" key="6"/>
<evidence type="ECO:0000305" key="7">
    <source>
    </source>
</evidence>
<evidence type="ECO:0000312" key="8">
    <source>
        <dbReference type="EMBL" id="AAS55775.2"/>
    </source>
</evidence>
<evidence type="ECO:0000312" key="9">
    <source>
        <dbReference type="EMBL" id="AAV32228.1"/>
    </source>
</evidence>
<evidence type="ECO:0000312" key="10">
    <source>
        <dbReference type="EMBL" id="BAF16611.1"/>
    </source>
</evidence>
<evidence type="ECO:0000312" key="11">
    <source>
        <dbReference type="EMBL" id="EEE62392.1"/>
    </source>
</evidence>
<reference key="1">
    <citation type="journal article" date="2005" name="Mol. Genet. Genomics">
        <title>A fine physical map of the rice chromosome 5.</title>
        <authorList>
            <person name="Cheng C.-H."/>
            <person name="Chung M.C."/>
            <person name="Liu S.-M."/>
            <person name="Chen S.-K."/>
            <person name="Kao F.Y."/>
            <person name="Lin S.-J."/>
            <person name="Hsiao S.-H."/>
            <person name="Tseng I.C."/>
            <person name="Hsing Y.-I.C."/>
            <person name="Wu H.-P."/>
            <person name="Chen C.-S."/>
            <person name="Shaw J.-F."/>
            <person name="Wu J."/>
            <person name="Matsumoto T."/>
            <person name="Sasaki T."/>
            <person name="Chen H.-C."/>
            <person name="Chow T.-Y."/>
        </authorList>
    </citation>
    <scope>NUCLEOTIDE SEQUENCE [LARGE SCALE GENOMIC DNA]</scope>
    <source>
        <strain>cv. Nipponbare</strain>
    </source>
</reference>
<reference key="2">
    <citation type="journal article" date="2005" name="Nature">
        <title>The map-based sequence of the rice genome.</title>
        <authorList>
            <consortium name="International rice genome sequencing project (IRGSP)"/>
        </authorList>
    </citation>
    <scope>NUCLEOTIDE SEQUENCE [LARGE SCALE GENOMIC DNA]</scope>
    <source>
        <strain>cv. Nipponbare</strain>
    </source>
</reference>
<reference key="3">
    <citation type="journal article" date="2008" name="Nucleic Acids Res.">
        <title>The rice annotation project database (RAP-DB): 2008 update.</title>
        <authorList>
            <consortium name="The rice annotation project (RAP)"/>
        </authorList>
    </citation>
    <scope>GENOME REANNOTATION</scope>
    <source>
        <strain>cv. Nipponbare</strain>
    </source>
</reference>
<reference key="4">
    <citation type="journal article" date="2013" name="Rice">
        <title>Improvement of the Oryza sativa Nipponbare reference genome using next generation sequence and optical map data.</title>
        <authorList>
            <person name="Kawahara Y."/>
            <person name="de la Bastide M."/>
            <person name="Hamilton J.P."/>
            <person name="Kanamori H."/>
            <person name="McCombie W.R."/>
            <person name="Ouyang S."/>
            <person name="Schwartz D.C."/>
            <person name="Tanaka T."/>
            <person name="Wu J."/>
            <person name="Zhou S."/>
            <person name="Childs K.L."/>
            <person name="Davidson R.M."/>
            <person name="Lin H."/>
            <person name="Quesada-Ocampo L."/>
            <person name="Vaillancourt B."/>
            <person name="Sakai H."/>
            <person name="Lee S.S."/>
            <person name="Kim J."/>
            <person name="Numa H."/>
            <person name="Itoh T."/>
            <person name="Buell C.R."/>
            <person name="Matsumoto T."/>
        </authorList>
    </citation>
    <scope>GENOME REANNOTATION</scope>
    <source>
        <strain>cv. Nipponbare</strain>
    </source>
</reference>
<reference key="5">
    <citation type="journal article" date="2005" name="PLoS Biol.">
        <title>The genomes of Oryza sativa: a history of duplications.</title>
        <authorList>
            <person name="Yu J."/>
            <person name="Wang J."/>
            <person name="Lin W."/>
            <person name="Li S."/>
            <person name="Li H."/>
            <person name="Zhou J."/>
            <person name="Ni P."/>
            <person name="Dong W."/>
            <person name="Hu S."/>
            <person name="Zeng C."/>
            <person name="Zhang J."/>
            <person name="Zhang Y."/>
            <person name="Li R."/>
            <person name="Xu Z."/>
            <person name="Li S."/>
            <person name="Li X."/>
            <person name="Zheng H."/>
            <person name="Cong L."/>
            <person name="Lin L."/>
            <person name="Yin J."/>
            <person name="Geng J."/>
            <person name="Li G."/>
            <person name="Shi J."/>
            <person name="Liu J."/>
            <person name="Lv H."/>
            <person name="Li J."/>
            <person name="Wang J."/>
            <person name="Deng Y."/>
            <person name="Ran L."/>
            <person name="Shi X."/>
            <person name="Wang X."/>
            <person name="Wu Q."/>
            <person name="Li C."/>
            <person name="Ren X."/>
            <person name="Wang J."/>
            <person name="Wang X."/>
            <person name="Li D."/>
            <person name="Liu D."/>
            <person name="Zhang X."/>
            <person name="Ji Z."/>
            <person name="Zhao W."/>
            <person name="Sun Y."/>
            <person name="Zhang Z."/>
            <person name="Bao J."/>
            <person name="Han Y."/>
            <person name="Dong L."/>
            <person name="Ji J."/>
            <person name="Chen P."/>
            <person name="Wu S."/>
            <person name="Liu J."/>
            <person name="Xiao Y."/>
            <person name="Bu D."/>
            <person name="Tan J."/>
            <person name="Yang L."/>
            <person name="Ye C."/>
            <person name="Zhang J."/>
            <person name="Xu J."/>
            <person name="Zhou Y."/>
            <person name="Yu Y."/>
            <person name="Zhang B."/>
            <person name="Zhuang S."/>
            <person name="Wei H."/>
            <person name="Liu B."/>
            <person name="Lei M."/>
            <person name="Yu H."/>
            <person name="Li Y."/>
            <person name="Xu H."/>
            <person name="Wei S."/>
            <person name="He X."/>
            <person name="Fang L."/>
            <person name="Zhang Z."/>
            <person name="Zhang Y."/>
            <person name="Huang X."/>
            <person name="Su Z."/>
            <person name="Tong W."/>
            <person name="Li J."/>
            <person name="Tong Z."/>
            <person name="Li S."/>
            <person name="Ye J."/>
            <person name="Wang L."/>
            <person name="Fang L."/>
            <person name="Lei T."/>
            <person name="Chen C.-S."/>
            <person name="Chen H.-C."/>
            <person name="Xu Z."/>
            <person name="Li H."/>
            <person name="Huang H."/>
            <person name="Zhang F."/>
            <person name="Xu H."/>
            <person name="Li N."/>
            <person name="Zhao C."/>
            <person name="Li S."/>
            <person name="Dong L."/>
            <person name="Huang Y."/>
            <person name="Li L."/>
            <person name="Xi Y."/>
            <person name="Qi Q."/>
            <person name="Li W."/>
            <person name="Zhang B."/>
            <person name="Hu W."/>
            <person name="Zhang Y."/>
            <person name="Tian X."/>
            <person name="Jiao Y."/>
            <person name="Liang X."/>
            <person name="Jin J."/>
            <person name="Gao L."/>
            <person name="Zheng W."/>
            <person name="Hao B."/>
            <person name="Liu S.-M."/>
            <person name="Wang W."/>
            <person name="Yuan L."/>
            <person name="Cao M."/>
            <person name="McDermott J."/>
            <person name="Samudrala R."/>
            <person name="Wang J."/>
            <person name="Wong G.K.-S."/>
            <person name="Yang H."/>
        </authorList>
    </citation>
    <scope>NUCLEOTIDE SEQUENCE [LARGE SCALE GENOMIC DNA]</scope>
    <source>
        <strain>cv. Nipponbare</strain>
    </source>
</reference>
<reference key="6">
    <citation type="journal article" date="2013" name="Cell Stress Chaperones">
        <title>Functional relevance of J-protein family of rice (Oryza sativa).</title>
        <authorList>
            <person name="Sarkar N.K."/>
            <person name="Thapar U."/>
            <person name="Kundnani P."/>
            <person name="Panwar P."/>
            <person name="Grover A."/>
        </authorList>
    </citation>
    <scope>GENE FAMILY</scope>
    <scope>NOMENCLATURE</scope>
</reference>
<reference key="7">
    <citation type="journal article" date="2013" name="J. Exp. Bot.">
        <title>Analysis of rice ER-resident J-proteins reveals diversity and functional differentiation of the ER-resident Hsp70 system in plants.</title>
        <authorList>
            <person name="Ohta M."/>
            <person name="Wakasa Y."/>
            <person name="Takahashi H."/>
            <person name="Hayashi S."/>
            <person name="Kudo K."/>
            <person name="Takaiwa F."/>
        </authorList>
    </citation>
    <scope>FUNCTION</scope>
    <scope>INTERACTION WITH BIP1</scope>
    <scope>SUBCELLULAR LOCATION</scope>
    <scope>INDUCTION</scope>
</reference>